<organism>
    <name type="scientific">Escherichia coli (strain K12 / DH10B)</name>
    <dbReference type="NCBI Taxonomy" id="316385"/>
    <lineage>
        <taxon>Bacteria</taxon>
        <taxon>Pseudomonadati</taxon>
        <taxon>Pseudomonadota</taxon>
        <taxon>Gammaproteobacteria</taxon>
        <taxon>Enterobacterales</taxon>
        <taxon>Enterobacteriaceae</taxon>
        <taxon>Escherichia</taxon>
    </lineage>
</organism>
<comment type="function">
    <text evidence="1">One of the primary rRNA binding proteins, it binds directly to 16S rRNA where it helps nucleate assembly of the platform of the 30S subunit by binding and bridging several RNA helices of the 16S rRNA.</text>
</comment>
<comment type="function">
    <text evidence="1">Forms an intersubunit bridge (bridge B4) with the 23S rRNA of the 50S subunit in the ribosome.</text>
</comment>
<comment type="subunit">
    <text evidence="1">Part of the 30S ribosomal subunit. Forms a bridge to the 50S subunit in the 70S ribosome, contacting the 23S rRNA.</text>
</comment>
<comment type="similarity">
    <text evidence="1">Belongs to the universal ribosomal protein uS15 family.</text>
</comment>
<evidence type="ECO:0000255" key="1">
    <source>
        <dbReference type="HAMAP-Rule" id="MF_01343"/>
    </source>
</evidence>
<evidence type="ECO:0000305" key="2"/>
<keyword id="KW-0687">Ribonucleoprotein</keyword>
<keyword id="KW-0689">Ribosomal protein</keyword>
<keyword id="KW-0694">RNA-binding</keyword>
<keyword id="KW-0699">rRNA-binding</keyword>
<reference key="1">
    <citation type="journal article" date="2008" name="J. Bacteriol.">
        <title>The complete genome sequence of Escherichia coli DH10B: insights into the biology of a laboratory workhorse.</title>
        <authorList>
            <person name="Durfee T."/>
            <person name="Nelson R."/>
            <person name="Baldwin S."/>
            <person name="Plunkett G. III"/>
            <person name="Burland V."/>
            <person name="Mau B."/>
            <person name="Petrosino J.F."/>
            <person name="Qin X."/>
            <person name="Muzny D.M."/>
            <person name="Ayele M."/>
            <person name="Gibbs R.A."/>
            <person name="Csorgo B."/>
            <person name="Posfai G."/>
            <person name="Weinstock G.M."/>
            <person name="Blattner F.R."/>
        </authorList>
    </citation>
    <scope>NUCLEOTIDE SEQUENCE [LARGE SCALE GENOMIC DNA]</scope>
    <source>
        <strain>K12 / DH10B</strain>
    </source>
</reference>
<proteinExistence type="inferred from homology"/>
<protein>
    <recommendedName>
        <fullName evidence="1">Small ribosomal subunit protein uS15</fullName>
    </recommendedName>
    <alternativeName>
        <fullName evidence="2">30S ribosomal protein S15</fullName>
    </alternativeName>
</protein>
<feature type="chain" id="PRO_1000143112" description="Small ribosomal subunit protein uS15">
    <location>
        <begin position="1"/>
        <end position="89"/>
    </location>
</feature>
<dbReference type="EMBL" id="CP000948">
    <property type="protein sequence ID" value="ACB04244.1"/>
    <property type="molecule type" value="Genomic_DNA"/>
</dbReference>
<dbReference type="RefSeq" id="WP_000059466.1">
    <property type="nucleotide sequence ID" value="NC_010473.1"/>
</dbReference>
<dbReference type="SMR" id="B1XGX7"/>
<dbReference type="GeneID" id="93778818"/>
<dbReference type="KEGG" id="ecd:ECDH10B_3339"/>
<dbReference type="HOGENOM" id="CLU_148518_0_0_6"/>
<dbReference type="GO" id="GO:0022627">
    <property type="term" value="C:cytosolic small ribosomal subunit"/>
    <property type="evidence" value="ECO:0007669"/>
    <property type="project" value="TreeGrafter"/>
</dbReference>
<dbReference type="GO" id="GO:0019843">
    <property type="term" value="F:rRNA binding"/>
    <property type="evidence" value="ECO:0007669"/>
    <property type="project" value="UniProtKB-UniRule"/>
</dbReference>
<dbReference type="GO" id="GO:0003735">
    <property type="term" value="F:structural constituent of ribosome"/>
    <property type="evidence" value="ECO:0007669"/>
    <property type="project" value="InterPro"/>
</dbReference>
<dbReference type="GO" id="GO:0006412">
    <property type="term" value="P:translation"/>
    <property type="evidence" value="ECO:0007669"/>
    <property type="project" value="UniProtKB-UniRule"/>
</dbReference>
<dbReference type="CDD" id="cd00353">
    <property type="entry name" value="Ribosomal_S15p_S13e"/>
    <property type="match status" value="1"/>
</dbReference>
<dbReference type="FunFam" id="1.10.287.10:FF:000002">
    <property type="entry name" value="30S ribosomal protein S15"/>
    <property type="match status" value="1"/>
</dbReference>
<dbReference type="Gene3D" id="6.10.250.3130">
    <property type="match status" value="1"/>
</dbReference>
<dbReference type="Gene3D" id="1.10.287.10">
    <property type="entry name" value="S15/NS1, RNA-binding"/>
    <property type="match status" value="1"/>
</dbReference>
<dbReference type="HAMAP" id="MF_01343_B">
    <property type="entry name" value="Ribosomal_uS15_B"/>
    <property type="match status" value="1"/>
</dbReference>
<dbReference type="InterPro" id="IPR000589">
    <property type="entry name" value="Ribosomal_uS15"/>
</dbReference>
<dbReference type="InterPro" id="IPR005290">
    <property type="entry name" value="Ribosomal_uS15_bac-type"/>
</dbReference>
<dbReference type="InterPro" id="IPR009068">
    <property type="entry name" value="uS15_NS1_RNA-bd_sf"/>
</dbReference>
<dbReference type="NCBIfam" id="TIGR00952">
    <property type="entry name" value="S15_bact"/>
    <property type="match status" value="1"/>
</dbReference>
<dbReference type="PANTHER" id="PTHR23321">
    <property type="entry name" value="RIBOSOMAL PROTEIN S15, BACTERIAL AND ORGANELLAR"/>
    <property type="match status" value="1"/>
</dbReference>
<dbReference type="PANTHER" id="PTHR23321:SF26">
    <property type="entry name" value="SMALL RIBOSOMAL SUBUNIT PROTEIN US15M"/>
    <property type="match status" value="1"/>
</dbReference>
<dbReference type="Pfam" id="PF00312">
    <property type="entry name" value="Ribosomal_S15"/>
    <property type="match status" value="1"/>
</dbReference>
<dbReference type="SMART" id="SM01387">
    <property type="entry name" value="Ribosomal_S15"/>
    <property type="match status" value="1"/>
</dbReference>
<dbReference type="SUPFAM" id="SSF47060">
    <property type="entry name" value="S15/NS1 RNA-binding domain"/>
    <property type="match status" value="1"/>
</dbReference>
<dbReference type="PROSITE" id="PS00362">
    <property type="entry name" value="RIBOSOMAL_S15"/>
    <property type="match status" value="1"/>
</dbReference>
<sequence>MSLSTEATAKIVSEFGRDANDTGSTEVQVALLTAQINHLQGHFAEHKKDHHSRRGLLRMVSQRRKLLDYLKRKDVARYTQLIERLGLRR</sequence>
<accession>B1XGX7</accession>
<name>RS15_ECODH</name>
<gene>
    <name evidence="1" type="primary">rpsO</name>
    <name type="ordered locus">ECDH10B_3339</name>
</gene>